<reference key="1">
    <citation type="journal article" date="2008" name="Foodborne Pathog. Dis.">
        <title>The complete genome sequence and analysis of the human pathogen Campylobacter lari.</title>
        <authorList>
            <person name="Miller W.G."/>
            <person name="Wang G."/>
            <person name="Binnewies T.T."/>
            <person name="Parker C.T."/>
        </authorList>
    </citation>
    <scope>NUCLEOTIDE SEQUENCE [LARGE SCALE GENOMIC DNA]</scope>
    <source>
        <strain>RM2100 / D67 / ATCC BAA-1060</strain>
    </source>
</reference>
<protein>
    <recommendedName>
        <fullName evidence="1">Large ribosomal subunit protein uL16</fullName>
    </recommendedName>
    <alternativeName>
        <fullName evidence="2">50S ribosomal protein L16</fullName>
    </alternativeName>
</protein>
<feature type="chain" id="PRO_1000166344" description="Large ribosomal subunit protein uL16">
    <location>
        <begin position="1"/>
        <end position="141"/>
    </location>
</feature>
<comment type="function">
    <text evidence="1">Binds 23S rRNA and is also seen to make contacts with the A and possibly P site tRNAs.</text>
</comment>
<comment type="subunit">
    <text evidence="1">Part of the 50S ribosomal subunit.</text>
</comment>
<comment type="similarity">
    <text evidence="1">Belongs to the universal ribosomal protein uL16 family.</text>
</comment>
<accession>B9KEE7</accession>
<name>RL16_CAMLR</name>
<sequence length="141" mass="16387">MLMPKRTKYRKMMKGRNRGYANRGTEFTFGDFALKATEAGRINSRQIEAARIALTRFVKRQGKTWIRVFPDKPLTKKPLETRMGKGKGAVEEWVMNIKPGRIIYEMAGVNEEMARQALTLAMHKLPFKTKFVTRESQNEIY</sequence>
<evidence type="ECO:0000255" key="1">
    <source>
        <dbReference type="HAMAP-Rule" id="MF_01342"/>
    </source>
</evidence>
<evidence type="ECO:0000305" key="2"/>
<gene>
    <name evidence="1" type="primary">rplP</name>
    <name type="ordered locus">Cla_0066</name>
</gene>
<organism>
    <name type="scientific">Campylobacter lari (strain RM2100 / D67 / ATCC BAA-1060)</name>
    <dbReference type="NCBI Taxonomy" id="306263"/>
    <lineage>
        <taxon>Bacteria</taxon>
        <taxon>Pseudomonadati</taxon>
        <taxon>Campylobacterota</taxon>
        <taxon>Epsilonproteobacteria</taxon>
        <taxon>Campylobacterales</taxon>
        <taxon>Campylobacteraceae</taxon>
        <taxon>Campylobacter</taxon>
    </lineage>
</organism>
<dbReference type="EMBL" id="CP000932">
    <property type="protein sequence ID" value="ACM63432.1"/>
    <property type="molecule type" value="Genomic_DNA"/>
</dbReference>
<dbReference type="RefSeq" id="WP_012660818.1">
    <property type="nucleotide sequence ID" value="NC_012039.1"/>
</dbReference>
<dbReference type="SMR" id="B9KEE7"/>
<dbReference type="STRING" id="306263.Cla_0066"/>
<dbReference type="GeneID" id="93004161"/>
<dbReference type="KEGG" id="cla:CLA_0066"/>
<dbReference type="eggNOG" id="COG0197">
    <property type="taxonomic scope" value="Bacteria"/>
</dbReference>
<dbReference type="HOGENOM" id="CLU_078858_2_1_7"/>
<dbReference type="Proteomes" id="UP000007727">
    <property type="component" value="Chromosome"/>
</dbReference>
<dbReference type="GO" id="GO:0022625">
    <property type="term" value="C:cytosolic large ribosomal subunit"/>
    <property type="evidence" value="ECO:0007669"/>
    <property type="project" value="TreeGrafter"/>
</dbReference>
<dbReference type="GO" id="GO:0019843">
    <property type="term" value="F:rRNA binding"/>
    <property type="evidence" value="ECO:0007669"/>
    <property type="project" value="UniProtKB-UniRule"/>
</dbReference>
<dbReference type="GO" id="GO:0003735">
    <property type="term" value="F:structural constituent of ribosome"/>
    <property type="evidence" value="ECO:0007669"/>
    <property type="project" value="InterPro"/>
</dbReference>
<dbReference type="GO" id="GO:0000049">
    <property type="term" value="F:tRNA binding"/>
    <property type="evidence" value="ECO:0007669"/>
    <property type="project" value="UniProtKB-KW"/>
</dbReference>
<dbReference type="GO" id="GO:0006412">
    <property type="term" value="P:translation"/>
    <property type="evidence" value="ECO:0007669"/>
    <property type="project" value="UniProtKB-UniRule"/>
</dbReference>
<dbReference type="CDD" id="cd01433">
    <property type="entry name" value="Ribosomal_L16_L10e"/>
    <property type="match status" value="1"/>
</dbReference>
<dbReference type="FunFam" id="3.90.1170.10:FF:000001">
    <property type="entry name" value="50S ribosomal protein L16"/>
    <property type="match status" value="1"/>
</dbReference>
<dbReference type="Gene3D" id="3.90.1170.10">
    <property type="entry name" value="Ribosomal protein L10e/L16"/>
    <property type="match status" value="1"/>
</dbReference>
<dbReference type="HAMAP" id="MF_01342">
    <property type="entry name" value="Ribosomal_uL16"/>
    <property type="match status" value="1"/>
</dbReference>
<dbReference type="InterPro" id="IPR047873">
    <property type="entry name" value="Ribosomal_uL16"/>
</dbReference>
<dbReference type="InterPro" id="IPR000114">
    <property type="entry name" value="Ribosomal_uL16_bact-type"/>
</dbReference>
<dbReference type="InterPro" id="IPR020798">
    <property type="entry name" value="Ribosomal_uL16_CS"/>
</dbReference>
<dbReference type="InterPro" id="IPR016180">
    <property type="entry name" value="Ribosomal_uL16_dom"/>
</dbReference>
<dbReference type="InterPro" id="IPR036920">
    <property type="entry name" value="Ribosomal_uL16_sf"/>
</dbReference>
<dbReference type="NCBIfam" id="TIGR01164">
    <property type="entry name" value="rplP_bact"/>
    <property type="match status" value="1"/>
</dbReference>
<dbReference type="PANTHER" id="PTHR12220">
    <property type="entry name" value="50S/60S RIBOSOMAL PROTEIN L16"/>
    <property type="match status" value="1"/>
</dbReference>
<dbReference type="PANTHER" id="PTHR12220:SF13">
    <property type="entry name" value="LARGE RIBOSOMAL SUBUNIT PROTEIN UL16M"/>
    <property type="match status" value="1"/>
</dbReference>
<dbReference type="Pfam" id="PF00252">
    <property type="entry name" value="Ribosomal_L16"/>
    <property type="match status" value="1"/>
</dbReference>
<dbReference type="PRINTS" id="PR00060">
    <property type="entry name" value="RIBOSOMALL16"/>
</dbReference>
<dbReference type="SUPFAM" id="SSF54686">
    <property type="entry name" value="Ribosomal protein L16p/L10e"/>
    <property type="match status" value="1"/>
</dbReference>
<dbReference type="PROSITE" id="PS00701">
    <property type="entry name" value="RIBOSOMAL_L16_2"/>
    <property type="match status" value="1"/>
</dbReference>
<proteinExistence type="inferred from homology"/>
<keyword id="KW-1185">Reference proteome</keyword>
<keyword id="KW-0687">Ribonucleoprotein</keyword>
<keyword id="KW-0689">Ribosomal protein</keyword>
<keyword id="KW-0694">RNA-binding</keyword>
<keyword id="KW-0699">rRNA-binding</keyword>
<keyword id="KW-0820">tRNA-binding</keyword>